<protein>
    <recommendedName>
        <fullName evidence="19">Chloride channel protein clh-3</fullName>
    </recommendedName>
</protein>
<dbReference type="EMBL" id="AF173172">
    <property type="protein sequence ID" value="AAF13165.1"/>
    <property type="molecule type" value="mRNA"/>
</dbReference>
<dbReference type="EMBL" id="AF319614">
    <property type="protein sequence ID" value="AAG49524.1"/>
    <property type="molecule type" value="mRNA"/>
</dbReference>
<dbReference type="EMBL" id="BX284602">
    <property type="protein sequence ID" value="CCD65907.1"/>
    <property type="molecule type" value="Genomic_DNA"/>
</dbReference>
<dbReference type="RefSeq" id="NP_001022060.1">
    <molecule id="Q9BMK9-1"/>
    <property type="nucleotide sequence ID" value="NM_001026889.6"/>
</dbReference>
<dbReference type="SMR" id="Q9BMK9"/>
<dbReference type="FunCoup" id="Q9BMK9">
    <property type="interactions" value="153"/>
</dbReference>
<dbReference type="STRING" id="6239.E04F6.11i.1"/>
<dbReference type="ChEMBL" id="CHEMBL2268011"/>
<dbReference type="TCDB" id="2.A.49.2.13">
    <property type="family name" value="the chloride carrier/channel (clc) family"/>
</dbReference>
<dbReference type="iPTMnet" id="Q9BMK9"/>
<dbReference type="PaxDb" id="6239-E04F6.11a"/>
<dbReference type="EnsemblMetazoa" id="E04F6.11a.1">
    <molecule id="Q9BMK9-1"/>
    <property type="protein sequence ID" value="E04F6.11a.1"/>
    <property type="gene ID" value="WBGene00000530"/>
</dbReference>
<dbReference type="EnsemblMetazoa" id="E04F6.11a.2">
    <molecule id="Q9BMK9-1"/>
    <property type="protein sequence ID" value="E04F6.11a.2"/>
    <property type="gene ID" value="WBGene00000530"/>
</dbReference>
<dbReference type="EnsemblMetazoa" id="E04F6.11a.3">
    <molecule id="Q9BMK9-1"/>
    <property type="protein sequence ID" value="E04F6.11a.3"/>
    <property type="gene ID" value="WBGene00000530"/>
</dbReference>
<dbReference type="EnsemblMetazoa" id="E04F6.11a.4">
    <molecule id="Q9BMK9-1"/>
    <property type="protein sequence ID" value="E04F6.11a.4"/>
    <property type="gene ID" value="WBGene00000530"/>
</dbReference>
<dbReference type="GeneID" id="174187"/>
<dbReference type="KEGG" id="cel:CELE_E04F6.11"/>
<dbReference type="UCSC" id="E04F6.11a">
    <molecule id="Q9BMK9-1"/>
    <property type="organism name" value="c. elegans"/>
</dbReference>
<dbReference type="AGR" id="WB:WBGene00000530"/>
<dbReference type="CTD" id="174187"/>
<dbReference type="WormBase" id="E04F6.11a">
    <molecule id="Q9BMK9-1"/>
    <property type="protein sequence ID" value="CE27906"/>
    <property type="gene ID" value="WBGene00000530"/>
    <property type="gene designation" value="clh-3"/>
</dbReference>
<dbReference type="eggNOG" id="KOG0476">
    <property type="taxonomic scope" value="Eukaryota"/>
</dbReference>
<dbReference type="GeneTree" id="ENSGT00940000168847"/>
<dbReference type="HOGENOM" id="CLU_006904_1_1_1"/>
<dbReference type="InParanoid" id="Q9BMK9"/>
<dbReference type="OrthoDB" id="4564at2759"/>
<dbReference type="PhylomeDB" id="Q9BMK9"/>
<dbReference type="Reactome" id="R-CEL-2672351">
    <property type="pathway name" value="Stimuli-sensing channels"/>
</dbReference>
<dbReference type="PRO" id="PR:Q9BMK9"/>
<dbReference type="Proteomes" id="UP000001940">
    <property type="component" value="Chromosome II"/>
</dbReference>
<dbReference type="Bgee" id="WBGene00000530">
    <property type="expression patterns" value="Expressed in adult organism and 3 other cell types or tissues"/>
</dbReference>
<dbReference type="ExpressionAtlas" id="Q9BMK9">
    <property type="expression patterns" value="baseline and differential"/>
</dbReference>
<dbReference type="GO" id="GO:0005886">
    <property type="term" value="C:plasma membrane"/>
    <property type="evidence" value="ECO:0000314"/>
    <property type="project" value="WormBase"/>
</dbReference>
<dbReference type="GO" id="GO:0005247">
    <property type="term" value="F:voltage-gated chloride channel activity"/>
    <property type="evidence" value="ECO:0000314"/>
    <property type="project" value="WormBase"/>
</dbReference>
<dbReference type="GO" id="GO:1902476">
    <property type="term" value="P:chloride transmembrane transport"/>
    <property type="evidence" value="ECO:0000314"/>
    <property type="project" value="WormBase"/>
</dbReference>
<dbReference type="GO" id="GO:0006821">
    <property type="term" value="P:chloride transport"/>
    <property type="evidence" value="ECO:0000318"/>
    <property type="project" value="GO_Central"/>
</dbReference>
<dbReference type="CDD" id="cd03683">
    <property type="entry name" value="ClC_1_like"/>
    <property type="match status" value="1"/>
</dbReference>
<dbReference type="FunFam" id="3.10.580.10:FF:000048">
    <property type="entry name" value="Chloride channel 2c"/>
    <property type="match status" value="1"/>
</dbReference>
<dbReference type="FunFam" id="1.10.3080.10:FF:000022">
    <property type="entry name" value="Chloride channel protein"/>
    <property type="match status" value="1"/>
</dbReference>
<dbReference type="FunFam" id="3.10.580.10:FF:000064">
    <property type="entry name" value="Chloride channel protein"/>
    <property type="match status" value="1"/>
</dbReference>
<dbReference type="Gene3D" id="3.10.580.10">
    <property type="entry name" value="CBS-domain"/>
    <property type="match status" value="2"/>
</dbReference>
<dbReference type="Gene3D" id="1.10.3080.10">
    <property type="entry name" value="Clc chloride channel"/>
    <property type="match status" value="1"/>
</dbReference>
<dbReference type="InterPro" id="IPR000644">
    <property type="entry name" value="CBS_dom"/>
</dbReference>
<dbReference type="InterPro" id="IPR046342">
    <property type="entry name" value="CBS_dom_sf"/>
</dbReference>
<dbReference type="InterPro" id="IPR014743">
    <property type="entry name" value="Cl-channel_core"/>
</dbReference>
<dbReference type="InterPro" id="IPR050970">
    <property type="entry name" value="Cl_channel_volt-gated"/>
</dbReference>
<dbReference type="InterPro" id="IPR001807">
    <property type="entry name" value="ClC"/>
</dbReference>
<dbReference type="PANTHER" id="PTHR45720">
    <property type="entry name" value="CHLORIDE CHANNEL PROTEIN 2"/>
    <property type="match status" value="1"/>
</dbReference>
<dbReference type="PANTHER" id="PTHR45720:SF10">
    <property type="entry name" value="CHLORIDE CHANNEL PROTEIN 2"/>
    <property type="match status" value="1"/>
</dbReference>
<dbReference type="Pfam" id="PF00571">
    <property type="entry name" value="CBS"/>
    <property type="match status" value="1"/>
</dbReference>
<dbReference type="Pfam" id="PF00654">
    <property type="entry name" value="Voltage_CLC"/>
    <property type="match status" value="1"/>
</dbReference>
<dbReference type="PRINTS" id="PR00762">
    <property type="entry name" value="CLCHANNEL"/>
</dbReference>
<dbReference type="SMART" id="SM00116">
    <property type="entry name" value="CBS"/>
    <property type="match status" value="2"/>
</dbReference>
<dbReference type="SUPFAM" id="SSF54631">
    <property type="entry name" value="CBS-domain pair"/>
    <property type="match status" value="1"/>
</dbReference>
<dbReference type="SUPFAM" id="SSF81340">
    <property type="entry name" value="Clc chloride channel"/>
    <property type="match status" value="1"/>
</dbReference>
<dbReference type="PROSITE" id="PS51371">
    <property type="entry name" value="CBS"/>
    <property type="match status" value="2"/>
</dbReference>
<feature type="chain" id="PRO_0000433362" description="Chloride channel protein clh-3" evidence="19">
    <location>
        <begin position="1"/>
        <end position="1001"/>
    </location>
</feature>
<feature type="topological domain" description="Cytoplasmic" evidence="19">
    <location>
        <begin position="1"/>
        <end position="48"/>
    </location>
</feature>
<feature type="transmembrane region" description="Helical" evidence="19">
    <location>
        <begin position="49"/>
        <end position="85"/>
    </location>
</feature>
<feature type="transmembrane region" description="Helical" evidence="19">
    <location>
        <begin position="91"/>
        <end position="117"/>
    </location>
</feature>
<feature type="intramembrane region" description="Helical" evidence="19">
    <location>
        <begin position="126"/>
        <end position="133"/>
    </location>
</feature>
<feature type="transmembrane region" description="Helical" evidence="19">
    <location>
        <begin position="142"/>
        <end position="160"/>
    </location>
</feature>
<feature type="transmembrane region" description="Helical" evidence="19">
    <location>
        <begin position="167"/>
        <end position="185"/>
    </location>
</feature>
<feature type="intramembrane region" description="Helical" evidence="19">
    <location>
        <begin position="202"/>
        <end position="214"/>
    </location>
</feature>
<feature type="intramembrane region" description="Helical" evidence="19">
    <location>
        <begin position="218"/>
        <end position="226"/>
    </location>
</feature>
<feature type="transmembrane region" description="Helical" evidence="19">
    <location>
        <begin position="238"/>
        <end position="258"/>
    </location>
</feature>
<feature type="transmembrane region" description="Helical" evidence="19">
    <location>
        <begin position="285"/>
        <end position="313"/>
    </location>
</feature>
<feature type="transmembrane region" description="Helical" evidence="19">
    <location>
        <begin position="322"/>
        <end position="341"/>
    </location>
</feature>
<feature type="transmembrane region" description="Helical" evidence="19">
    <location>
        <begin position="405"/>
        <end position="425"/>
    </location>
</feature>
<feature type="transmembrane region" description="Helical" evidence="19">
    <location>
        <begin position="433"/>
        <end position="456"/>
    </location>
</feature>
<feature type="intramembrane region" description="Helical" evidence="19">
    <location>
        <begin position="473"/>
        <end position="487"/>
    </location>
</feature>
<feature type="intramembrane region" description="Note=Loop between two helices" evidence="19">
    <location>
        <begin position="488"/>
        <end position="489"/>
    </location>
</feature>
<feature type="intramembrane region" description="Helical" evidence="19">
    <location>
        <begin position="490"/>
        <end position="501"/>
    </location>
</feature>
<feature type="intramembrane region" description="Note=Loop between two helices" evidence="19">
    <location>
        <begin position="502"/>
        <end position="506"/>
    </location>
</feature>
<feature type="transmembrane region" description="Helical" evidence="19">
    <location>
        <begin position="507"/>
        <end position="524"/>
    </location>
</feature>
<feature type="topological domain" description="Cytoplasmic" evidence="19">
    <location>
        <begin position="525"/>
        <end position="1001"/>
    </location>
</feature>
<feature type="domain" description="CBS 1" evidence="3">
    <location>
        <begin position="560"/>
        <end position="619"/>
    </location>
</feature>
<feature type="domain" description="CBS 2" evidence="3">
    <location>
        <begin position="788"/>
        <end position="845"/>
    </location>
</feature>
<feature type="region of interest" description="Disordered" evidence="4">
    <location>
        <begin position="634"/>
        <end position="662"/>
    </location>
</feature>
<feature type="coiled-coil region" evidence="2">
    <location>
        <begin position="625"/>
        <end position="657"/>
    </location>
</feature>
<feature type="short sequence motif" description="Selectivity filter part_1" evidence="1">
    <location>
        <begin position="123"/>
        <end position="127"/>
    </location>
</feature>
<feature type="short sequence motif" description="Selectivity filter part_2" evidence="1">
    <location>
        <begin position="165"/>
        <end position="169"/>
    </location>
</feature>
<feature type="short sequence motif" description="Selectivity filter part_3" evidence="1">
    <location>
        <begin position="433"/>
        <end position="437"/>
    </location>
</feature>
<feature type="compositionally biased region" description="Basic and acidic residues" evidence="4">
    <location>
        <begin position="634"/>
        <end position="650"/>
    </location>
</feature>
<feature type="binding site" evidence="1">
    <location>
        <position position="124"/>
    </location>
    <ligand>
        <name>chloride</name>
        <dbReference type="ChEBI" id="CHEBI:17996"/>
    </ligand>
</feature>
<feature type="binding site" evidence="1">
    <location>
        <position position="434"/>
    </location>
    <ligand>
        <name>chloride</name>
        <dbReference type="ChEBI" id="CHEBI:17996"/>
    </ligand>
</feature>
<feature type="binding site" evidence="1">
    <location>
        <position position="435"/>
    </location>
    <ligand>
        <name>chloride</name>
        <dbReference type="ChEBI" id="CHEBI:17996"/>
    </ligand>
</feature>
<feature type="binding site" evidence="1">
    <location>
        <position position="529"/>
    </location>
    <ligand>
        <name>chloride</name>
        <dbReference type="ChEBI" id="CHEBI:17996"/>
    </ligand>
</feature>
<feature type="site" description="Essential for gck-3-mediated inhibition of channel activity" evidence="15">
    <location>
        <position position="232"/>
    </location>
</feature>
<feature type="site" description="Essential for gck-3-mediated inhibition of channel activity" evidence="15">
    <location>
        <position position="805"/>
    </location>
</feature>
<feature type="modified residue" description="Phosphoserine; by gck-3" evidence="13">
    <location>
        <position position="742"/>
    </location>
</feature>
<feature type="modified residue" description="Phosphoserine; by gck-3" evidence="13">
    <location>
        <position position="747"/>
    </location>
</feature>
<feature type="splice variant" id="VSP_057741" description="In isoform b." evidence="19">
    <original>M</original>
    <variation>MPSRTPLSKIEWQSLLPLPPEKSEKDATIENNEELEKIRMPAGKEYDLQPGSHLGVYKTVRGLPIDEDSKSM</variation>
    <location>
        <position position="1"/>
    </location>
</feature>
<feature type="splice variant" id="VSP_057742" description="In isoform b." evidence="19">
    <original>FLIVPVAKNGPQVAKNETLTGLSEENARKILTVEEKQALFDAASLATPKREMSGKTINPVHIESHHTIGDIFRSITHLSFGRQNFPKKNNHNEFDLFGEERT</original>
    <variation>Y</variation>
    <location>
        <begin position="669"/>
        <end position="770"/>
    </location>
</feature>
<feature type="splice variant" id="VSP_057743" description="In isoform b." evidence="19">
    <original>LRLAIEYLQ</original>
    <variation>VCFLISRKK</variation>
    <location>
        <begin position="833"/>
        <end position="841"/>
    </location>
</feature>
<feature type="splice variant" id="VSP_057744" description="In isoform b." evidence="19">
    <location>
        <begin position="842"/>
        <end position="1001"/>
    </location>
</feature>
<feature type="mutagenesis site" description="Constitutive activation and loss of pH sensitivity; in isoform a." evidence="11">
    <original>E</original>
    <variation>A</variation>
    <location>
        <position position="167"/>
    </location>
</feature>
<feature type="mutagenesis site" description="Constitutive activation, loss of pH sensitivity, loss of sensitivity to chloride levels and conditioning depolarizing voltages; in isoform b." evidence="11">
    <original>E</original>
    <variation>A</variation>
    <location>
        <position position="167"/>
    </location>
</feature>
<feature type="mutagenesis site" description="Increased sensitivity to MTSET-mediated inhibition; in isoform a and isoform b. Inhibition is slower; in isoform a. Reduced sensitivity to MTSET-mediated inhibition; when associated with D-559; in isoform a." evidence="11 13">
    <original>E</original>
    <variation>C</variation>
    <location>
        <position position="167"/>
    </location>
</feature>
<feature type="mutagenesis site" description="Loss of gck-3-mediated inhibition." evidence="15">
    <original>Y</original>
    <variation>A</variation>
    <location>
        <position position="232"/>
    </location>
</feature>
<feature type="mutagenesis site" description="In n995; increase channel activity and accumulation of eggs in the uterus resulting from a defect in egg-laying. Reduced HSN activity. Reduced sensitivity to gck-3-mediated inhibition; in isoform a." evidence="16">
    <original>V</original>
    <variation>A</variation>
    <location>
        <position position="495"/>
    </location>
</feature>
<feature type="mutagenesis site" description="Confers similar gating properties to isoform b; in isoform a. Reduced sensitivity to MTSET-mediated inhibition; when associated with C-167; in isoform a." evidence="14">
    <original>F</original>
    <variation>D</variation>
    <location>
        <position position="559"/>
    </location>
</feature>
<feature type="mutagenesis site" description="Constitutively active, loss of inhibition by gck-3-mediated phosphorylation." evidence="13">
    <original>S</original>
    <variation>A</variation>
    <location>
        <position position="742"/>
    </location>
</feature>
<feature type="mutagenesis site" description="Phosphomimetic mutant whose activity is sensitive to gck-3-mediated inhibition and to cell swelling-induced activation. Severe reduction in channel activity, loss of cell swelling-induced activation; when associated with E-747." evidence="13 15">
    <original>S</original>
    <variation>E</variation>
    <location>
        <position position="742"/>
    </location>
</feature>
<feature type="mutagenesis site" description="No effect on activity." evidence="13">
    <original>T</original>
    <variation>A</variation>
    <location>
        <position position="744"/>
    </location>
</feature>
<feature type="mutagenesis site" description="Constitutively active, loss of inhibition by gck-3-mediated phosphorylation." evidence="13">
    <original>S</original>
    <variation>A</variation>
    <location>
        <position position="747"/>
    </location>
</feature>
<feature type="mutagenesis site" description="Phosphomimetic mutant whose activity is sensitive to gck-3-mediated inhibition but insensitive to cell swelling-induced activation. Severe reduction in channel activity, loss of cell swelling-induced activation; when associated with E-742." evidence="13 15">
    <original>S</original>
    <variation>E</variation>
    <location>
        <position position="747"/>
    </location>
</feature>
<feature type="mutagenesis site" description="Loss of gck-3-mediated inhibition." evidence="15">
    <original>H</original>
    <variation>A</variation>
    <location>
        <position position="805"/>
    </location>
</feature>
<feature type="mutagenesis site" description="Confers similar gating properties to isoform b; in isoform a." evidence="14">
    <original>L</original>
    <variation>E</variation>
    <location>
        <position position="833"/>
    </location>
</feature>
<feature type="mutagenesis site" description="Confers similar gating properties to isoform b; in isoform a." evidence="14">
    <original>A</original>
    <variation>K</variation>
    <location>
        <position position="836"/>
    </location>
</feature>
<feature type="mutagenesis site" description="Confers similar gating properties to isoform b; in isoform a." evidence="14">
    <original>I</original>
    <variation>K</variation>
    <location>
        <position position="837"/>
    </location>
</feature>
<name>CLH3_CAEEL</name>
<accession>Q9BMK9</accession>
<accession>Q7KKH7</accession>
<sequence length="1001" mass="110787">MGIGTKILSKIEKNKTSDGLTIPLTPTTQKQSSSWCSFESIKTFFRTVIRDWIFLALLGFIMASLSFGMDYAILNLQNGQMRLFDLVKEYHFTLAYLVWVGYVVGLILLSAVCAHYIAPQAIGSGIPEMKTILRGVILKEYLSVRTLLSKMIGLTLSLGSGLPMGKEGPFVHVASVVASQLTRLVHGSSGGIFENESRSGEMLAAGCAVGVACTFSAPIGGVLFSIEVTSVYFAVRNYWRGFFAATCSATLFRILRMFSVSAAVTVEAHYQTNFPPQNVFLPQELPIFALIGLVCGLAGSIFVYLHRRTVLFLRRNWLAKMIFQKYWLIYPIFIATFISSLSFPLGLGKFMGGEERFSHTMKEFFVDCAWTAPPNDSYACPMPTSNATSSDSFDIRHWKGDNYDYSPFVTLSSFQVVYFFLAILASTLPVPSGIFMPVFVLGAAFGRLVGEGVFSLDPYGHISGDIQFFVRPGVYAVVGAAAFCGAVTHTVSVAVIVFELTGQLCHLLPVMIAVLIANAVASYLQPSIYDSIIRIKNLPYLPDIPHTTSLYHQMLIEQFMISPLVYIAKDSTVGDIKRALETKTRIRAFPLVENMESLALVGSVSRSQLQRYVDSQIGTKARFAEATRRIKQRLEDEESERKRREESKSDDTEDSLETTGAGERRASRFLIVPVAKNGPQVAKNETLTGLSEENARKILTVEEKQALFDAASLATPKREMSGKTINPVHIESHHTIGDIFRSITHLSFGRQNFPKKNNHNEFDLFGEERTEWEDMMLNQKLDLSQLDIDSTPFQLSEYTSLFKAHSLFSLLGLNRAYVTKKGQLIGVVALKELRLAIEYLQSGKVPTPGMSIFNEPPTEQSIYEKSARLESGRATGDAQNAAFVTDNGEDDAQNDYIQPPLEVVRRGALTPNRMSELTRLENVRTTPESPHFEVSSPSTSSSCVSIDFSPLDAANSENGSVGGLVLNVPSLPTRARSANELTRQNTHVQINLPDDVHDEKF</sequence>
<proteinExistence type="evidence at protein level"/>
<comment type="function">
    <molecule>Isoform a</molecule>
    <text evidence="5 6 7 8 9 10 11 12 16">Voltage-gated chloride channel (PubMed:10567397, PubMed:11078724, PubMed:11231150, PubMed:12163466, PubMed:15684092). Insensitive to depolarizing conditioning voltages, requires low voltages for activation, insensitive to chloride levels and has a mild sensitivity to low pH. Channel gating properties are conferred by the cytoplasmic C-terminus (PubMed:14565992, PubMed:16500974). Plays a role in egg laying by modulating hermaphrodite-specific neurons (HSN) excitability and the ovulatory contractions of gap-junction-coupled gonadal sheath cells (PubMed:11231150, PubMed:24431435). When active, may prevent tubular formation of the excretory canals (PubMed:18049475). Activated during oocyte meiotic maturation and by membrane hyperpolarization and cell swelling (PubMed:11231150, PubMed:14565992). Inhibited by Zn(2+) and to a lesser extent by Cd(2+) (PubMed:11231150).</text>
</comment>
<comment type="function">
    <molecule>Isoform b</molecule>
    <text evidence="5 6 7 9 11">Voltage-gated chloride channel (PubMed:10567397, PubMed:11078724, PubMed:11231150). Sensitive to depolarizing conditioning voltages, requires stronger voltages for activation and activation is slower, is inhibited by low concentrations of chloride and is activated by low pH. Channel gating properties are conferred by the cytoplasmic C-terminus (PubMed:14565992, PubMed:16500974).</text>
</comment>
<comment type="subunit">
    <text evidence="10">Isoform a interacts (via RFLI motif) with gck-3 (via C-terminus).</text>
</comment>
<comment type="subcellular location">
    <subcellularLocation>
        <location evidence="5 6 7 8 9 10 11 13 14 15 16">Cell membrane</location>
        <topology evidence="2">Multi-pass membrane protein</topology>
    </subcellularLocation>
</comment>
<comment type="alternative products">
    <event type="alternative splicing"/>
    <isoform>
        <id>Q9BMK9-1</id>
        <name evidence="22">a</name>
        <name evidence="17">clh-3b</name>
        <sequence type="displayed"/>
    </isoform>
    <isoform>
        <id>Q9BMK9-2</id>
        <name evidence="20">b</name>
        <name evidence="18">clh-3a</name>
        <sequence type="described" ref="VSP_057741 VSP_057742 VSP_057743 VSP_057744"/>
    </isoform>
</comment>
<comment type="tissue specificity">
    <text evidence="5 6 7">Expressed in excretory cell, 4 anterior epithelial cells of the intestine, hermaphrodite-specific neurons and enteric muscles (PubMed:10567397, PubMed:11078724). Expressed also in vulva and uterus (PubMed:10567397). Isoform a is expressed in oocytes (at protein level) (PubMed:11231150).</text>
</comment>
<comment type="domain">
    <text evidence="11 14 15">The CBS domains, the R-helix linker (543-562) and the C-terminal domain (833-1001) regulate channel sensitivity to voltage, pH and extracellular chloride concentrations, probably by altering the outer pore structure (PubMed:16500974, PubMed:20581474). The region (738-751) between the CBS domains is essential for channel activation (PubMed:23083714).</text>
</comment>
<comment type="PTM">
    <text evidence="8 13">Phosphorylated by gck-3; phosphorylation at both Ser-742 and Ser-747 is required to inhibit channel activity (PubMed:19088383). Dephosphorylated by gsp-1/2 during cell swelling and oocyte meiotic maturation, which results in channel activation (PubMed:12163466).</text>
</comment>
<comment type="disruption phenotype">
    <text evidence="7">RNAi-mediated knockdown in oocytes results in inhibition of hyperpolarization-induced or swelling-induced current and in premature ovulatory contractions of gonadal sheath cells. Normal adaptive response to hypotonic swelling.</text>
</comment>
<comment type="similarity">
    <text evidence="19">Belongs to the chloride channel (TC 2.A.49) family.</text>
</comment>
<reference evidence="20" key="1">
    <citation type="journal article" date="1999" name="J. Biol. Chem.">
        <title>CLC chloride channels in Caenorhabditis elegans.</title>
        <authorList>
            <person name="Schriever A.M."/>
            <person name="Friedrich T."/>
            <person name="Pusch M."/>
            <person name="Jentsch T.J."/>
        </authorList>
    </citation>
    <scope>NUCLEOTIDE SEQUENCE [MRNA] (ISOFORM B)</scope>
    <scope>FUNCTION</scope>
    <scope>SUBCELLULAR LOCATION</scope>
    <scope>TISSUE SPECIFICITY</scope>
    <source>
        <strain evidence="20">Bristol N2</strain>
    </source>
</reference>
<reference evidence="19" key="2">
    <citation type="journal article" date="2000" name="Am. J. Physiol.">
        <title>Into ion channel and transporter function. Caenorhabditis elegans ClC-type chloride channels: novel variants and functional expression.</title>
        <authorList>
            <person name="Nehrke K."/>
            <person name="Begenisich T."/>
            <person name="Pilato J."/>
            <person name="Melvin J.E."/>
        </authorList>
    </citation>
    <scope>NUCLEOTIDE SEQUENCE [MRNA] (ISOFORM A)</scope>
    <scope>FUNCTION</scope>
    <scope>SUBCELLULAR LOCATION</scope>
    <scope>TISSUE SPECIFICITY</scope>
</reference>
<reference evidence="21" key="3">
    <citation type="journal article" date="1998" name="Science">
        <title>Genome sequence of the nematode C. elegans: a platform for investigating biology.</title>
        <authorList>
            <consortium name="The C. elegans sequencing consortium"/>
        </authorList>
    </citation>
    <scope>NUCLEOTIDE SEQUENCE [LARGE SCALE GENOMIC DNA]</scope>
    <source>
        <strain evidence="21">Bristol N2</strain>
    </source>
</reference>
<reference evidence="19" key="4">
    <citation type="journal article" date="2001" name="Curr. Biol.">
        <title>CLH-3, a ClC-2 anion channel ortholog activated during meiotic maturation in C. elegans oocytes.</title>
        <authorList>
            <person name="Rutledge E."/>
            <person name="Bianchi L."/>
            <person name="Christensen M."/>
            <person name="Boehmer C."/>
            <person name="Morrison R."/>
            <person name="Broslat A."/>
            <person name="Beld A.M."/>
            <person name="George A.L."/>
            <person name="Greenstein D."/>
            <person name="Strange K."/>
        </authorList>
    </citation>
    <scope>FUNCTION</scope>
    <scope>SUBCELLULAR LOCATION</scope>
    <scope>TISSUE SPECIFICITY</scope>
    <scope>DISRUPTION PHENOTYPE</scope>
</reference>
<reference evidence="19" key="5">
    <citation type="journal article" date="2002" name="J. Cell Biol.">
        <title>Cell cycle- and swelling-induced activation of a Caenorhabditis elegans ClC channel is mediated by CeGLC-7alpha/beta phosphatases.</title>
        <authorList>
            <person name="Rutledge E."/>
            <person name="Denton J."/>
            <person name="Strange K."/>
        </authorList>
    </citation>
    <scope>FUNCTION</scope>
    <scope>SUBCELLULAR LOCATION</scope>
    <scope>DEPHOSPHORYLATION BY GSP-1/2</scope>
</reference>
<reference evidence="19" key="6">
    <citation type="journal article" date="2004" name="J. Physiol. (Lond.)">
        <title>Alternative splicing of N- and C-termini of a C. elegans ClC channel alters gating and sensitivity to external Cl- and H+.</title>
        <authorList>
            <person name="Denton J."/>
            <person name="Nehrke K."/>
            <person name="Rutledge E."/>
            <person name="Morrison R."/>
            <person name="Strange K."/>
        </authorList>
    </citation>
    <scope>FUNCTION</scope>
    <scope>ACTIVATION MECHANISM</scope>
    <scope>SUBCELLULAR LOCATION</scope>
</reference>
<reference evidence="19" key="7">
    <citation type="journal article" date="2005" name="J. Gen. Physiol.">
        <title>GCK-3, a newly identified Ste20 kinase, binds to and regulates the activity of a cell cycle-dependent ClC anion channel.</title>
        <authorList>
            <person name="Denton J."/>
            <person name="Nehrke K."/>
            <person name="Yin X."/>
            <person name="Morrison R."/>
            <person name="Strange K."/>
        </authorList>
    </citation>
    <scope>FUNCTION</scope>
    <scope>INTERACTION WITH GCK-3</scope>
    <scope>SUBCELLULAR LOCATION</scope>
</reference>
<reference evidence="19" key="8">
    <citation type="journal article" date="2006" name="Biophys. J.">
        <title>Carboxy terminus splice variation alters ClC channel gating and extracellular cysteine reactivity.</title>
        <authorList>
            <person name="He L."/>
            <person name="Denton J."/>
            <person name="Nehrke K."/>
            <person name="Strange K."/>
        </authorList>
    </citation>
    <scope>FUNCTION</scope>
    <scope>ACTIVATION MECHANISM</scope>
    <scope>SUBCELLULAR LOCATION</scope>
    <scope>DOMAIN</scope>
    <scope>MUTAGENESIS OF GLU-167</scope>
</reference>
<reference evidence="19" key="9">
    <citation type="journal article" date="2008" name="EMBO Rep.">
        <title>Caenorhabditis elegans WNK-STE20 pathway regulates tube formation by modulating ClC channel activity.</title>
        <authorList>
            <person name="Hisamoto N."/>
            <person name="Moriguchi T."/>
            <person name="Urushiyama S."/>
            <person name="Mitani S."/>
            <person name="Shibuya H."/>
            <person name="Matsumoto K."/>
        </authorList>
    </citation>
    <scope>FUNCTION</scope>
</reference>
<reference evidence="19" key="10">
    <citation type="journal article" date="2009" name="J. Gen. Physiol.">
        <title>Identification of regulatory phosphorylation sites in a cell volume- and Ste20 kinase-dependent ClC anion channel.</title>
        <authorList>
            <person name="Falin R.A."/>
            <person name="Morrison R."/>
            <person name="Ham A.J."/>
            <person name="Strange K."/>
        </authorList>
    </citation>
    <scope>SUBCELLULAR LOCATION</scope>
    <scope>PHOSPHORYLATION AT SER-742 AND SER-747</scope>
    <scope>IDENTIFICATION BY MASS SPECTROMETRY</scope>
    <scope>MUTAGENESIS OF SER-742; THR-744 AND SER-747</scope>
</reference>
<reference evidence="19" key="11">
    <citation type="journal article" date="2010" name="Channels">
        <title>Unique gating properties of C. elegans ClC anion channel splice variants are determined by altered CBS domain conformation and the R-helix linker.</title>
        <authorList>
            <person name="Dave S."/>
            <person name="Sheehan J.H."/>
            <person name="Meiler J."/>
            <person name="Strange K."/>
        </authorList>
    </citation>
    <scope>SUBCELLULAR LOCATION</scope>
    <scope>DOMAIN</scope>
    <scope>MUTAGENESIS OF GLU-167; PHE-559; LEU-833; ALA-836 AND ILE-837</scope>
</reference>
<reference evidence="19" key="12">
    <citation type="journal article" date="2012" name="Biophys. J.">
        <title>CLC anion channel regulatory phosphorylation and conserved signal transduction domains.</title>
        <authorList>
            <person name="Miyazaki H."/>
            <person name="Yamada T."/>
            <person name="Parton A."/>
            <person name="Morrison R."/>
            <person name="Kim S."/>
            <person name="Beth A.H."/>
            <person name="Strange K."/>
        </authorList>
    </citation>
    <scope>SUBCELLULAR LOCATION</scope>
    <scope>DOMAIN</scope>
    <scope>MUTAGENESIS OF TYR-232; SER-742; SER-747 AND HIS-805</scope>
</reference>
<reference evidence="19" key="13">
    <citation type="journal article" date="2014" name="J. Neurosci.">
        <title>The voltage-gated anion channels encoded by clh-3 regulate egg laying in C. elegans by modulating motor neuron excitability.</title>
        <authorList>
            <person name="Branicky R."/>
            <person name="Miyazaki H."/>
            <person name="Strange K."/>
            <person name="Schafer W.R."/>
        </authorList>
    </citation>
    <scope>FUNCTION</scope>
    <scope>SUBCELLULAR LOCATION</scope>
    <scope>MUTAGENESIS OF VAL-495</scope>
</reference>
<gene>
    <name evidence="22" type="primary">clh-3</name>
    <name evidence="22" type="synonym">clc-3</name>
    <name evidence="22" type="ORF">E04F6.11</name>
</gene>
<organism evidence="21">
    <name type="scientific">Caenorhabditis elegans</name>
    <dbReference type="NCBI Taxonomy" id="6239"/>
    <lineage>
        <taxon>Eukaryota</taxon>
        <taxon>Metazoa</taxon>
        <taxon>Ecdysozoa</taxon>
        <taxon>Nematoda</taxon>
        <taxon>Chromadorea</taxon>
        <taxon>Rhabditida</taxon>
        <taxon>Rhabditina</taxon>
        <taxon>Rhabditomorpha</taxon>
        <taxon>Rhabditoidea</taxon>
        <taxon>Rhabditidae</taxon>
        <taxon>Peloderinae</taxon>
        <taxon>Caenorhabditis</taxon>
    </lineage>
</organism>
<evidence type="ECO:0000250" key="1">
    <source>
        <dbReference type="UniProtKB" id="P37019"/>
    </source>
</evidence>
<evidence type="ECO:0000255" key="2"/>
<evidence type="ECO:0000255" key="3">
    <source>
        <dbReference type="PROSITE-ProRule" id="PRU00703"/>
    </source>
</evidence>
<evidence type="ECO:0000256" key="4">
    <source>
        <dbReference type="SAM" id="MobiDB-lite"/>
    </source>
</evidence>
<evidence type="ECO:0000269" key="5">
    <source>
    </source>
</evidence>
<evidence type="ECO:0000269" key="6">
    <source>
    </source>
</evidence>
<evidence type="ECO:0000269" key="7">
    <source>
    </source>
</evidence>
<evidence type="ECO:0000269" key="8">
    <source>
    </source>
</evidence>
<evidence type="ECO:0000269" key="9">
    <source>
    </source>
</evidence>
<evidence type="ECO:0000269" key="10">
    <source>
    </source>
</evidence>
<evidence type="ECO:0000269" key="11">
    <source>
    </source>
</evidence>
<evidence type="ECO:0000269" key="12">
    <source>
    </source>
</evidence>
<evidence type="ECO:0000269" key="13">
    <source>
    </source>
</evidence>
<evidence type="ECO:0000269" key="14">
    <source>
    </source>
</evidence>
<evidence type="ECO:0000269" key="15">
    <source>
    </source>
</evidence>
<evidence type="ECO:0000269" key="16">
    <source>
    </source>
</evidence>
<evidence type="ECO:0000303" key="17">
    <source>
    </source>
</evidence>
<evidence type="ECO:0000303" key="18">
    <source>
    </source>
</evidence>
<evidence type="ECO:0000305" key="19"/>
<evidence type="ECO:0000312" key="20">
    <source>
        <dbReference type="EMBL" id="AAF13165.1"/>
    </source>
</evidence>
<evidence type="ECO:0000312" key="21">
    <source>
        <dbReference type="Proteomes" id="UP000001940"/>
    </source>
</evidence>
<evidence type="ECO:0000312" key="22">
    <source>
        <dbReference type="WormBase" id="E04F6.11a"/>
    </source>
</evidence>
<keyword id="KW-0025">Alternative splicing</keyword>
<keyword id="KW-1003">Cell membrane</keyword>
<keyword id="KW-0868">Chloride</keyword>
<keyword id="KW-0175">Coiled coil</keyword>
<keyword id="KW-0406">Ion transport</keyword>
<keyword id="KW-0472">Membrane</keyword>
<keyword id="KW-0597">Phosphoprotein</keyword>
<keyword id="KW-1185">Reference proteome</keyword>
<keyword id="KW-0677">Repeat</keyword>
<keyword id="KW-0812">Transmembrane</keyword>
<keyword id="KW-1133">Transmembrane helix</keyword>
<keyword id="KW-0813">Transport</keyword>